<feature type="chain" id="PRO_0000257728" description="HTH-type transcriptional regulator BetI">
    <location>
        <begin position="1"/>
        <end position="194"/>
    </location>
</feature>
<feature type="domain" description="HTH tetR-type" evidence="2">
    <location>
        <begin position="8"/>
        <end position="68"/>
    </location>
</feature>
<feature type="DNA-binding region" description="H-T-H motif" evidence="2">
    <location>
        <begin position="31"/>
        <end position="50"/>
    </location>
</feature>
<proteinExistence type="inferred from homology"/>
<accession>Q1BQE0</accession>
<comment type="function">
    <text evidence="1">Repressor involved in the biosynthesis of the osmoprotectant glycine betaine. It represses transcription of the choline transporter BetT and the genes of BetAB involved in the synthesis of glycine betaine (By similarity).</text>
</comment>
<comment type="pathway">
    <text>Amine and polyamine biosynthesis; betaine biosynthesis via choline pathway [regulation].</text>
</comment>
<reference key="1">
    <citation type="submission" date="2006-05" db="EMBL/GenBank/DDBJ databases">
        <title>Complete sequence of chromosome 2 of Burkholderia cenocepacia AU 1054.</title>
        <authorList>
            <consortium name="US DOE Joint Genome Institute"/>
            <person name="Copeland A."/>
            <person name="Lucas S."/>
            <person name="Lapidus A."/>
            <person name="Barry K."/>
            <person name="Detter J.C."/>
            <person name="Glavina del Rio T."/>
            <person name="Hammon N."/>
            <person name="Israni S."/>
            <person name="Dalin E."/>
            <person name="Tice H."/>
            <person name="Pitluck S."/>
            <person name="Chain P."/>
            <person name="Malfatti S."/>
            <person name="Shin M."/>
            <person name="Vergez L."/>
            <person name="Schmutz J."/>
            <person name="Larimer F."/>
            <person name="Land M."/>
            <person name="Hauser L."/>
            <person name="Kyrpides N."/>
            <person name="Lykidis A."/>
            <person name="LiPuma J.J."/>
            <person name="Konstantinidis K."/>
            <person name="Tiedje J.M."/>
            <person name="Richardson P."/>
        </authorList>
    </citation>
    <scope>NUCLEOTIDE SEQUENCE [LARGE SCALE GENOMIC DNA]</scope>
    <source>
        <strain>AU 1054</strain>
    </source>
</reference>
<dbReference type="EMBL" id="CP000379">
    <property type="protein sequence ID" value="ABF78165.1"/>
    <property type="molecule type" value="Genomic_DNA"/>
</dbReference>
<dbReference type="SMR" id="Q1BQE0"/>
<dbReference type="HOGENOM" id="CLU_069356_15_4_4"/>
<dbReference type="UniPathway" id="UPA00529"/>
<dbReference type="GO" id="GO:0003700">
    <property type="term" value="F:DNA-binding transcription factor activity"/>
    <property type="evidence" value="ECO:0007669"/>
    <property type="project" value="UniProtKB-UniRule"/>
</dbReference>
<dbReference type="GO" id="GO:0000976">
    <property type="term" value="F:transcription cis-regulatory region binding"/>
    <property type="evidence" value="ECO:0007669"/>
    <property type="project" value="TreeGrafter"/>
</dbReference>
<dbReference type="GO" id="GO:0019285">
    <property type="term" value="P:glycine betaine biosynthetic process from choline"/>
    <property type="evidence" value="ECO:0007669"/>
    <property type="project" value="UniProtKB-UniRule"/>
</dbReference>
<dbReference type="GO" id="GO:0045892">
    <property type="term" value="P:negative regulation of DNA-templated transcription"/>
    <property type="evidence" value="ECO:0007669"/>
    <property type="project" value="UniProtKB-UniRule"/>
</dbReference>
<dbReference type="Gene3D" id="1.10.357.10">
    <property type="entry name" value="Tetracycline Repressor, domain 2"/>
    <property type="match status" value="1"/>
</dbReference>
<dbReference type="HAMAP" id="MF_00768">
    <property type="entry name" value="HTH_type_BetI"/>
    <property type="match status" value="1"/>
</dbReference>
<dbReference type="InterPro" id="IPR039538">
    <property type="entry name" value="BetI_C"/>
</dbReference>
<dbReference type="InterPro" id="IPR023772">
    <property type="entry name" value="DNA-bd_HTH_TetR-type_CS"/>
</dbReference>
<dbReference type="InterPro" id="IPR009057">
    <property type="entry name" value="Homeodomain-like_sf"/>
</dbReference>
<dbReference type="InterPro" id="IPR050109">
    <property type="entry name" value="HTH-type_TetR-like_transc_reg"/>
</dbReference>
<dbReference type="InterPro" id="IPR001647">
    <property type="entry name" value="HTH_TetR"/>
</dbReference>
<dbReference type="InterPro" id="IPR036271">
    <property type="entry name" value="Tet_transcr_reg_TetR-rel_C_sf"/>
</dbReference>
<dbReference type="InterPro" id="IPR017757">
    <property type="entry name" value="Tscrpt_rep_BetI"/>
</dbReference>
<dbReference type="NCBIfam" id="TIGR03384">
    <property type="entry name" value="betaine_BetI"/>
    <property type="match status" value="1"/>
</dbReference>
<dbReference type="NCBIfam" id="NF001978">
    <property type="entry name" value="PRK00767.1"/>
    <property type="match status" value="1"/>
</dbReference>
<dbReference type="PANTHER" id="PTHR30055:SF234">
    <property type="entry name" value="HTH-TYPE TRANSCRIPTIONAL REGULATOR BETI"/>
    <property type="match status" value="1"/>
</dbReference>
<dbReference type="PANTHER" id="PTHR30055">
    <property type="entry name" value="HTH-TYPE TRANSCRIPTIONAL REGULATOR RUTR"/>
    <property type="match status" value="1"/>
</dbReference>
<dbReference type="Pfam" id="PF13977">
    <property type="entry name" value="TetR_C_6"/>
    <property type="match status" value="1"/>
</dbReference>
<dbReference type="Pfam" id="PF00440">
    <property type="entry name" value="TetR_N"/>
    <property type="match status" value="1"/>
</dbReference>
<dbReference type="SUPFAM" id="SSF46689">
    <property type="entry name" value="Homeodomain-like"/>
    <property type="match status" value="1"/>
</dbReference>
<dbReference type="SUPFAM" id="SSF48498">
    <property type="entry name" value="Tetracyclin repressor-like, C-terminal domain"/>
    <property type="match status" value="1"/>
</dbReference>
<dbReference type="PROSITE" id="PS01081">
    <property type="entry name" value="HTH_TETR_1"/>
    <property type="match status" value="1"/>
</dbReference>
<dbReference type="PROSITE" id="PS50977">
    <property type="entry name" value="HTH_TETR_2"/>
    <property type="match status" value="1"/>
</dbReference>
<gene>
    <name evidence="2" type="primary">betI</name>
    <name type="ordered locus">Bcen_3270</name>
</gene>
<protein>
    <recommendedName>
        <fullName evidence="2">HTH-type transcriptional regulator BetI</fullName>
    </recommendedName>
</protein>
<name>BETI_BURO1</name>
<organism>
    <name type="scientific">Burkholderia orbicola (strain AU 1054)</name>
    <dbReference type="NCBI Taxonomy" id="331271"/>
    <lineage>
        <taxon>Bacteria</taxon>
        <taxon>Pseudomonadati</taxon>
        <taxon>Pseudomonadota</taxon>
        <taxon>Betaproteobacteria</taxon>
        <taxon>Burkholderiales</taxon>
        <taxon>Burkholderiaceae</taxon>
        <taxon>Burkholderia</taxon>
        <taxon>Burkholderia cepacia complex</taxon>
        <taxon>Burkholderia orbicola</taxon>
    </lineage>
</organism>
<evidence type="ECO:0000250" key="1"/>
<evidence type="ECO:0000255" key="2">
    <source>
        <dbReference type="HAMAP-Rule" id="MF_00768"/>
    </source>
</evidence>
<sequence>MPKVGMREIRRAQLIDATLRSIDEAGLPGTTLASVAQRANISTGIVSHYFGDKDGLLEATMRHVLRDLWSATTRRRVAARKDPRSRLRAVVAANFDDTQVSAPVMKTWLAFWSQSMHDPMLKRLQHVNTRRLHSNLCAEFAKALPLAKAREAASGLAALIDGLWLRGALAGGPIDTRAALKLAHDYIDLLLASD</sequence>
<keyword id="KW-0238">DNA-binding</keyword>
<keyword id="KW-0678">Repressor</keyword>
<keyword id="KW-0804">Transcription</keyword>
<keyword id="KW-0805">Transcription regulation</keyword>